<keyword id="KW-1064">Adaptive immunity</keyword>
<keyword id="KW-0903">Direct protein sequencing</keyword>
<keyword id="KW-0391">Immunity</keyword>
<keyword id="KW-1280">Immunoglobulin</keyword>
<keyword id="KW-1185">Reference proteome</keyword>
<name>KV14_RABIT</name>
<dbReference type="PIR" id="A91436">
    <property type="entry name" value="KVRB16"/>
</dbReference>
<dbReference type="SMR" id="P01695"/>
<dbReference type="FunCoup" id="P01695">
    <property type="interactions" value="212"/>
</dbReference>
<dbReference type="STRING" id="9986.ENSOCUP00000016373"/>
<dbReference type="InParanoid" id="P01695"/>
<dbReference type="Proteomes" id="UP000001811">
    <property type="component" value="Unplaced"/>
</dbReference>
<dbReference type="GO" id="GO:0019814">
    <property type="term" value="C:immunoglobulin complex"/>
    <property type="evidence" value="ECO:0007669"/>
    <property type="project" value="UniProtKB-KW"/>
</dbReference>
<dbReference type="GO" id="GO:0002250">
    <property type="term" value="P:adaptive immune response"/>
    <property type="evidence" value="ECO:0007669"/>
    <property type="project" value="UniProtKB-KW"/>
</dbReference>
<dbReference type="FunFam" id="2.60.40.10:FF:000350">
    <property type="entry name" value="Immunoglobulin kappa chain variable 18-36"/>
    <property type="match status" value="1"/>
</dbReference>
<dbReference type="Gene3D" id="2.60.40.10">
    <property type="entry name" value="Immunoglobulins"/>
    <property type="match status" value="1"/>
</dbReference>
<dbReference type="InterPro" id="IPR007110">
    <property type="entry name" value="Ig-like_dom"/>
</dbReference>
<dbReference type="InterPro" id="IPR036179">
    <property type="entry name" value="Ig-like_dom_sf"/>
</dbReference>
<dbReference type="InterPro" id="IPR013783">
    <property type="entry name" value="Ig-like_fold"/>
</dbReference>
<dbReference type="InterPro" id="IPR003599">
    <property type="entry name" value="Ig_sub"/>
</dbReference>
<dbReference type="InterPro" id="IPR013106">
    <property type="entry name" value="Ig_V-set"/>
</dbReference>
<dbReference type="InterPro" id="IPR050150">
    <property type="entry name" value="IgV_Light_Chain"/>
</dbReference>
<dbReference type="PANTHER" id="PTHR23267">
    <property type="entry name" value="IMMUNOGLOBULIN LIGHT CHAIN"/>
    <property type="match status" value="1"/>
</dbReference>
<dbReference type="Pfam" id="PF07686">
    <property type="entry name" value="V-set"/>
    <property type="match status" value="1"/>
</dbReference>
<dbReference type="SMART" id="SM00409">
    <property type="entry name" value="IG"/>
    <property type="match status" value="1"/>
</dbReference>
<dbReference type="SMART" id="SM00406">
    <property type="entry name" value="IGv"/>
    <property type="match status" value="1"/>
</dbReference>
<dbReference type="SUPFAM" id="SSF48726">
    <property type="entry name" value="Immunoglobulin"/>
    <property type="match status" value="1"/>
</dbReference>
<dbReference type="PROSITE" id="PS50835">
    <property type="entry name" value="IG_LIKE"/>
    <property type="match status" value="1"/>
</dbReference>
<protein>
    <recommendedName>
        <fullName>Ig kappa chain V region K16-167</fullName>
    </recommendedName>
</protein>
<sequence>ALVMTQTPSPVSAAVGGTVTISCQASQSVYSNNLSWFQQKPGQPPKLLIYKASTLASGVPSRFKGSGSGTQFTLPISGVECDDAATYYCQGTNTGNNIVFGTGTEVVVK</sequence>
<proteinExistence type="evidence at protein level"/>
<feature type="chain" id="PRO_0000059732" description="Ig kappa chain V region K16-167">
    <location>
        <begin position="1"/>
        <end position="109" status="greater than"/>
    </location>
</feature>
<feature type="region of interest" description="Framework-1">
    <location>
        <begin position="1"/>
        <end position="23"/>
    </location>
</feature>
<feature type="region of interest" description="Complementarity-determining-1">
    <location>
        <begin position="24"/>
        <end position="35"/>
    </location>
</feature>
<feature type="region of interest" description="Framework-2">
    <location>
        <begin position="36"/>
        <end position="50"/>
    </location>
</feature>
<feature type="region of interest" description="Complementarity-determining-2">
    <location>
        <begin position="51"/>
        <end position="57"/>
    </location>
</feature>
<feature type="region of interest" description="Framework-3">
    <location>
        <begin position="58"/>
        <end position="89"/>
    </location>
</feature>
<feature type="region of interest" description="Complementarity-determining-3">
    <location>
        <begin position="90"/>
        <end position="99"/>
    </location>
</feature>
<feature type="region of interest" description="Framework-4">
    <location>
        <begin position="100"/>
        <end position="109"/>
    </location>
</feature>
<feature type="non-terminal residue">
    <location>
        <position position="109"/>
    </location>
</feature>
<accession>P01695</accession>
<reference key="1">
    <citation type="journal article" date="1977" name="FEBS Lett.">
        <title>The amino acid sequence of the eight-chain variable region of a rabbit antibody against the streptococcal group A variant polysaccharide (antibody K16-167).</title>
        <authorList>
            <person name="Riesen W.F."/>
            <person name="Braun D.G."/>
        </authorList>
    </citation>
    <scope>PROTEIN SEQUENCE</scope>
</reference>
<reference key="2">
    <citation type="journal article" date="1977" name="FEBS Lett.">
        <authorList>
            <person name="Riesen W.F."/>
            <person name="Braun D.G."/>
        </authorList>
    </citation>
    <scope>ERRATUM OF PUBMED:404188</scope>
    <scope>SEQUENCE REVISION TO 22 AND 105</scope>
</reference>
<organism>
    <name type="scientific">Oryctolagus cuniculus</name>
    <name type="common">Rabbit</name>
    <dbReference type="NCBI Taxonomy" id="9986"/>
    <lineage>
        <taxon>Eukaryota</taxon>
        <taxon>Metazoa</taxon>
        <taxon>Chordata</taxon>
        <taxon>Craniata</taxon>
        <taxon>Vertebrata</taxon>
        <taxon>Euteleostomi</taxon>
        <taxon>Mammalia</taxon>
        <taxon>Eutheria</taxon>
        <taxon>Euarchontoglires</taxon>
        <taxon>Glires</taxon>
        <taxon>Lagomorpha</taxon>
        <taxon>Leporidae</taxon>
        <taxon>Oryctolagus</taxon>
    </lineage>
</organism>
<comment type="miscellaneous">
    <text>This chain was obtained from antibody to the polysaccharide of a streptococcal group a variant and was isolated from the serum of a single rabbit.</text>
</comment>